<gene>
    <name evidence="1" type="primary">folD</name>
    <name type="ordered locus">CENSYa_0115</name>
</gene>
<dbReference type="EC" id="1.5.1.5" evidence="1"/>
<dbReference type="EC" id="3.5.4.9" evidence="1"/>
<dbReference type="EMBL" id="DP000238">
    <property type="protein sequence ID" value="ABK76760.1"/>
    <property type="molecule type" value="Genomic_DNA"/>
</dbReference>
<dbReference type="SMR" id="A0RTU3"/>
<dbReference type="STRING" id="414004.CENSYa_0115"/>
<dbReference type="EnsemblBacteria" id="ABK76760">
    <property type="protein sequence ID" value="ABK76760"/>
    <property type="gene ID" value="CENSYa_0115"/>
</dbReference>
<dbReference type="KEGG" id="csy:CENSYa_0115"/>
<dbReference type="PATRIC" id="fig|414004.10.peg.105"/>
<dbReference type="HOGENOM" id="CLU_034045_2_1_2"/>
<dbReference type="UniPathway" id="UPA00193"/>
<dbReference type="Proteomes" id="UP000000758">
    <property type="component" value="Chromosome"/>
</dbReference>
<dbReference type="GO" id="GO:0005829">
    <property type="term" value="C:cytosol"/>
    <property type="evidence" value="ECO:0007669"/>
    <property type="project" value="TreeGrafter"/>
</dbReference>
<dbReference type="GO" id="GO:0004477">
    <property type="term" value="F:methenyltetrahydrofolate cyclohydrolase activity"/>
    <property type="evidence" value="ECO:0007669"/>
    <property type="project" value="UniProtKB-UniRule"/>
</dbReference>
<dbReference type="GO" id="GO:0004488">
    <property type="term" value="F:methylenetetrahydrofolate dehydrogenase (NADP+) activity"/>
    <property type="evidence" value="ECO:0007669"/>
    <property type="project" value="UniProtKB-UniRule"/>
</dbReference>
<dbReference type="GO" id="GO:0000105">
    <property type="term" value="P:L-histidine biosynthetic process"/>
    <property type="evidence" value="ECO:0007669"/>
    <property type="project" value="UniProtKB-KW"/>
</dbReference>
<dbReference type="GO" id="GO:0009086">
    <property type="term" value="P:methionine biosynthetic process"/>
    <property type="evidence" value="ECO:0007669"/>
    <property type="project" value="UniProtKB-KW"/>
</dbReference>
<dbReference type="GO" id="GO:0006164">
    <property type="term" value="P:purine nucleotide biosynthetic process"/>
    <property type="evidence" value="ECO:0007669"/>
    <property type="project" value="UniProtKB-KW"/>
</dbReference>
<dbReference type="GO" id="GO:0035999">
    <property type="term" value="P:tetrahydrofolate interconversion"/>
    <property type="evidence" value="ECO:0007669"/>
    <property type="project" value="UniProtKB-UniRule"/>
</dbReference>
<dbReference type="CDD" id="cd01080">
    <property type="entry name" value="NAD_bind_m-THF_DH_Cyclohyd"/>
    <property type="match status" value="1"/>
</dbReference>
<dbReference type="FunFam" id="3.40.50.10860:FF:000005">
    <property type="entry name" value="C-1-tetrahydrofolate synthase, cytoplasmic, putative"/>
    <property type="match status" value="1"/>
</dbReference>
<dbReference type="Gene3D" id="3.40.50.10860">
    <property type="entry name" value="Leucine Dehydrogenase, chain A, domain 1"/>
    <property type="match status" value="1"/>
</dbReference>
<dbReference type="Gene3D" id="3.40.50.720">
    <property type="entry name" value="NAD(P)-binding Rossmann-like Domain"/>
    <property type="match status" value="1"/>
</dbReference>
<dbReference type="HAMAP" id="MF_01576">
    <property type="entry name" value="THF_DHG_CYH"/>
    <property type="match status" value="1"/>
</dbReference>
<dbReference type="InterPro" id="IPR046346">
    <property type="entry name" value="Aminoacid_DH-like_N_sf"/>
</dbReference>
<dbReference type="InterPro" id="IPR036291">
    <property type="entry name" value="NAD(P)-bd_dom_sf"/>
</dbReference>
<dbReference type="InterPro" id="IPR000672">
    <property type="entry name" value="THF_DH/CycHdrlase"/>
</dbReference>
<dbReference type="InterPro" id="IPR020630">
    <property type="entry name" value="THF_DH/CycHdrlase_cat_dom"/>
</dbReference>
<dbReference type="InterPro" id="IPR020867">
    <property type="entry name" value="THF_DH/CycHdrlase_CS"/>
</dbReference>
<dbReference type="InterPro" id="IPR020631">
    <property type="entry name" value="THF_DH/CycHdrlase_NAD-bd_dom"/>
</dbReference>
<dbReference type="PANTHER" id="PTHR48099:SF5">
    <property type="entry name" value="C-1-TETRAHYDROFOLATE SYNTHASE, CYTOPLASMIC"/>
    <property type="match status" value="1"/>
</dbReference>
<dbReference type="PANTHER" id="PTHR48099">
    <property type="entry name" value="C-1-TETRAHYDROFOLATE SYNTHASE, CYTOPLASMIC-RELATED"/>
    <property type="match status" value="1"/>
</dbReference>
<dbReference type="Pfam" id="PF00763">
    <property type="entry name" value="THF_DHG_CYH"/>
    <property type="match status" value="1"/>
</dbReference>
<dbReference type="Pfam" id="PF02882">
    <property type="entry name" value="THF_DHG_CYH_C"/>
    <property type="match status" value="1"/>
</dbReference>
<dbReference type="PRINTS" id="PR00085">
    <property type="entry name" value="THFDHDRGNASE"/>
</dbReference>
<dbReference type="SUPFAM" id="SSF53223">
    <property type="entry name" value="Aminoacid dehydrogenase-like, N-terminal domain"/>
    <property type="match status" value="1"/>
</dbReference>
<dbReference type="SUPFAM" id="SSF51735">
    <property type="entry name" value="NAD(P)-binding Rossmann-fold domains"/>
    <property type="match status" value="1"/>
</dbReference>
<dbReference type="PROSITE" id="PS00766">
    <property type="entry name" value="THF_DHG_CYH_1"/>
    <property type="match status" value="1"/>
</dbReference>
<dbReference type="PROSITE" id="PS00767">
    <property type="entry name" value="THF_DHG_CYH_2"/>
    <property type="match status" value="1"/>
</dbReference>
<organism>
    <name type="scientific">Cenarchaeum symbiosum (strain A)</name>
    <dbReference type="NCBI Taxonomy" id="414004"/>
    <lineage>
        <taxon>Archaea</taxon>
        <taxon>Nitrososphaerota</taxon>
        <taxon>Candidatus Cenarchaeales</taxon>
        <taxon>Candidatus Cenarchaeaceae</taxon>
        <taxon>Candidatus Cenarchaeum</taxon>
    </lineage>
</organism>
<name>FOLD_CENSY</name>
<keyword id="KW-0028">Amino-acid biosynthesis</keyword>
<keyword id="KW-0368">Histidine biosynthesis</keyword>
<keyword id="KW-0378">Hydrolase</keyword>
<keyword id="KW-0486">Methionine biosynthesis</keyword>
<keyword id="KW-0511">Multifunctional enzyme</keyword>
<keyword id="KW-0521">NADP</keyword>
<keyword id="KW-0554">One-carbon metabolism</keyword>
<keyword id="KW-0560">Oxidoreductase</keyword>
<keyword id="KW-0658">Purine biosynthesis</keyword>
<keyword id="KW-1185">Reference proteome</keyword>
<evidence type="ECO:0000255" key="1">
    <source>
        <dbReference type="HAMAP-Rule" id="MF_01576"/>
    </source>
</evidence>
<sequence>MDGKAVAAAVKERVKMAVAELKSGGTDPCLATVLVGDDPASGTYVRNKHAACAEVGITTQDHRLGPSTTEGDLLKLIAELNSDRSVHGILVQMPLPEGIREIKVVSAISPLKDVDGLTPLNAGLLTAGTATLIPCTPLGIMEMLDYYNIELEGKEVVLINRSRLVGIPLHHLFLGRNATVTTCHSRTKDIGSISRRADVIVTAVGNRDKFVLTPDMVKEGAVVIDVAISRSDRGLTGDADYAAVSEKASHITPVPGGVGPMTVAMLLKNTTTAASLVKSLER</sequence>
<accession>A0RTU3</accession>
<proteinExistence type="inferred from homology"/>
<reference key="1">
    <citation type="journal article" date="2006" name="Proc. Natl. Acad. Sci. U.S.A.">
        <title>Genomic analysis of the uncultivated marine crenarchaeote Cenarchaeum symbiosum.</title>
        <authorList>
            <person name="Hallam S.J."/>
            <person name="Konstantinidis K.T."/>
            <person name="Putnam N."/>
            <person name="Schleper C."/>
            <person name="Watanabe Y."/>
            <person name="Sugahara J."/>
            <person name="Preston C."/>
            <person name="de la Torre J."/>
            <person name="Richardson P.M."/>
            <person name="DeLong E.F."/>
        </authorList>
    </citation>
    <scope>NUCLEOTIDE SEQUENCE [LARGE SCALE GENOMIC DNA]</scope>
    <source>
        <strain>A</strain>
    </source>
</reference>
<protein>
    <recommendedName>
        <fullName evidence="1">Bifunctional protein FolD</fullName>
    </recommendedName>
    <domain>
        <recommendedName>
            <fullName evidence="1">Methylenetetrahydrofolate dehydrogenase</fullName>
            <ecNumber evidence="1">1.5.1.5</ecNumber>
        </recommendedName>
    </domain>
    <domain>
        <recommendedName>
            <fullName evidence="1">Methenyltetrahydrofolate cyclohydrolase</fullName>
            <ecNumber evidence="1">3.5.4.9</ecNumber>
        </recommendedName>
    </domain>
</protein>
<feature type="chain" id="PRO_0000305896" description="Bifunctional protein FolD">
    <location>
        <begin position="1"/>
        <end position="282"/>
    </location>
</feature>
<feature type="binding site" evidence="1">
    <location>
        <begin position="160"/>
        <end position="162"/>
    </location>
    <ligand>
        <name>NADP(+)</name>
        <dbReference type="ChEBI" id="CHEBI:58349"/>
    </ligand>
</feature>
<feature type="binding site" evidence="1">
    <location>
        <position position="185"/>
    </location>
    <ligand>
        <name>NADP(+)</name>
        <dbReference type="ChEBI" id="CHEBI:58349"/>
    </ligand>
</feature>
<feature type="binding site" evidence="1">
    <location>
        <position position="228"/>
    </location>
    <ligand>
        <name>NADP(+)</name>
        <dbReference type="ChEBI" id="CHEBI:58349"/>
    </ligand>
</feature>
<comment type="function">
    <text evidence="1">Catalyzes the oxidation of 5,10-methylenetetrahydrofolate to 5,10-methenyltetrahydrofolate and then the hydrolysis of 5,10-methenyltetrahydrofolate to 10-formyltetrahydrofolate.</text>
</comment>
<comment type="catalytic activity">
    <reaction evidence="1">
        <text>(6R)-5,10-methylene-5,6,7,8-tetrahydrofolate + NADP(+) = (6R)-5,10-methenyltetrahydrofolate + NADPH</text>
        <dbReference type="Rhea" id="RHEA:22812"/>
        <dbReference type="ChEBI" id="CHEBI:15636"/>
        <dbReference type="ChEBI" id="CHEBI:57455"/>
        <dbReference type="ChEBI" id="CHEBI:57783"/>
        <dbReference type="ChEBI" id="CHEBI:58349"/>
        <dbReference type="EC" id="1.5.1.5"/>
    </reaction>
</comment>
<comment type="catalytic activity">
    <reaction evidence="1">
        <text>(6R)-5,10-methenyltetrahydrofolate + H2O = (6R)-10-formyltetrahydrofolate + H(+)</text>
        <dbReference type="Rhea" id="RHEA:23700"/>
        <dbReference type="ChEBI" id="CHEBI:15377"/>
        <dbReference type="ChEBI" id="CHEBI:15378"/>
        <dbReference type="ChEBI" id="CHEBI:57455"/>
        <dbReference type="ChEBI" id="CHEBI:195366"/>
        <dbReference type="EC" id="3.5.4.9"/>
    </reaction>
</comment>
<comment type="pathway">
    <text evidence="1">One-carbon metabolism; tetrahydrofolate interconversion.</text>
</comment>
<comment type="subunit">
    <text evidence="1">Homodimer.</text>
</comment>
<comment type="similarity">
    <text evidence="1">Belongs to the tetrahydrofolate dehydrogenase/cyclohydrolase family.</text>
</comment>